<name>TSGA_BUCAT</name>
<reference key="1">
    <citation type="journal article" date="2009" name="Science">
        <title>The dynamics and time scale of ongoing genomic erosion in symbiotic bacteria.</title>
        <authorList>
            <person name="Moran N.A."/>
            <person name="McLaughlin H.J."/>
            <person name="Sorek R."/>
        </authorList>
    </citation>
    <scope>NUCLEOTIDE SEQUENCE [LARGE SCALE GENOMIC DNA]</scope>
    <source>
        <strain>Tuc7</strain>
    </source>
</reference>
<protein>
    <recommendedName>
        <fullName evidence="1">Protein TsgA homolog</fullName>
    </recommendedName>
</protein>
<comment type="subcellular location">
    <subcellularLocation>
        <location evidence="1">Cell membrane</location>
        <topology evidence="1">Multi-pass membrane protein</topology>
    </subcellularLocation>
</comment>
<comment type="similarity">
    <text evidence="1">Belongs to the major facilitator superfamily. TsgA family.</text>
</comment>
<evidence type="ECO:0000255" key="1">
    <source>
        <dbReference type="HAMAP-Rule" id="MF_01044"/>
    </source>
</evidence>
<feature type="chain" id="PRO_1000149594" description="Protein TsgA homolog">
    <location>
        <begin position="1"/>
        <end position="388"/>
    </location>
</feature>
<feature type="transmembrane region" description="Helical" evidence="1">
    <location>
        <begin position="11"/>
        <end position="31"/>
    </location>
</feature>
<feature type="transmembrane region" description="Helical" evidence="1">
    <location>
        <begin position="50"/>
        <end position="70"/>
    </location>
</feature>
<feature type="transmembrane region" description="Helical" evidence="1">
    <location>
        <begin position="77"/>
        <end position="97"/>
    </location>
</feature>
<feature type="transmembrane region" description="Helical" evidence="1">
    <location>
        <begin position="101"/>
        <end position="121"/>
    </location>
</feature>
<feature type="transmembrane region" description="Helical" evidence="1">
    <location>
        <begin position="133"/>
        <end position="153"/>
    </location>
</feature>
<feature type="transmembrane region" description="Helical" evidence="1">
    <location>
        <begin position="160"/>
        <end position="180"/>
    </location>
</feature>
<feature type="transmembrane region" description="Helical" evidence="1">
    <location>
        <begin position="206"/>
        <end position="226"/>
    </location>
</feature>
<feature type="transmembrane region" description="Helical" evidence="1">
    <location>
        <begin position="244"/>
        <end position="264"/>
    </location>
</feature>
<feature type="transmembrane region" description="Helical" evidence="1">
    <location>
        <begin position="268"/>
        <end position="288"/>
    </location>
</feature>
<feature type="transmembrane region" description="Helical" evidence="1">
    <location>
        <begin position="298"/>
        <end position="318"/>
    </location>
</feature>
<feature type="transmembrane region" description="Helical" evidence="1">
    <location>
        <begin position="332"/>
        <end position="352"/>
    </location>
</feature>
<feature type="transmembrane region" description="Helical" evidence="1">
    <location>
        <begin position="360"/>
        <end position="380"/>
    </location>
</feature>
<organism>
    <name type="scientific">Buchnera aphidicola subsp. Acyrthosiphon pisum (strain Tuc7)</name>
    <dbReference type="NCBI Taxonomy" id="561501"/>
    <lineage>
        <taxon>Bacteria</taxon>
        <taxon>Pseudomonadati</taxon>
        <taxon>Pseudomonadota</taxon>
        <taxon>Gammaproteobacteria</taxon>
        <taxon>Enterobacterales</taxon>
        <taxon>Erwiniaceae</taxon>
        <taxon>Buchnera</taxon>
    </lineage>
</organism>
<gene>
    <name evidence="1" type="primary">tsgA</name>
    <name type="ordered locus">BUAPTUC7_529</name>
</gene>
<dbReference type="EMBL" id="CP001158">
    <property type="protein sequence ID" value="ACL30325.1"/>
    <property type="molecule type" value="Genomic_DNA"/>
</dbReference>
<dbReference type="RefSeq" id="WP_012619573.1">
    <property type="nucleotide sequence ID" value="NC_011834.1"/>
</dbReference>
<dbReference type="SMR" id="B8D860"/>
<dbReference type="KEGG" id="bau:BUAPTUC7_529"/>
<dbReference type="HOGENOM" id="CLU_056916_0_0_6"/>
<dbReference type="GO" id="GO:0005886">
    <property type="term" value="C:plasma membrane"/>
    <property type="evidence" value="ECO:0007669"/>
    <property type="project" value="UniProtKB-SubCell"/>
</dbReference>
<dbReference type="GO" id="GO:0022857">
    <property type="term" value="F:transmembrane transporter activity"/>
    <property type="evidence" value="ECO:0007669"/>
    <property type="project" value="InterPro"/>
</dbReference>
<dbReference type="Gene3D" id="1.20.1250.20">
    <property type="entry name" value="MFS general substrate transporter like domains"/>
    <property type="match status" value="2"/>
</dbReference>
<dbReference type="HAMAP" id="MF_01044">
    <property type="entry name" value="MFS_TsgA"/>
    <property type="match status" value="1"/>
</dbReference>
<dbReference type="InterPro" id="IPR011701">
    <property type="entry name" value="MFS"/>
</dbReference>
<dbReference type="InterPro" id="IPR020846">
    <property type="entry name" value="MFS_dom"/>
</dbReference>
<dbReference type="InterPro" id="IPR036259">
    <property type="entry name" value="MFS_trans_sf"/>
</dbReference>
<dbReference type="InterPro" id="IPR023528">
    <property type="entry name" value="MFS_TsgA"/>
</dbReference>
<dbReference type="InterPro" id="IPR050375">
    <property type="entry name" value="MFS_TsgA-like"/>
</dbReference>
<dbReference type="NCBIfam" id="NF002982">
    <property type="entry name" value="PRK03699.1"/>
    <property type="match status" value="1"/>
</dbReference>
<dbReference type="PANTHER" id="PTHR43702">
    <property type="entry name" value="L-FUCOSE-PROTON SYMPORTER"/>
    <property type="match status" value="1"/>
</dbReference>
<dbReference type="PANTHER" id="PTHR43702:SF3">
    <property type="entry name" value="PROTEIN TSGA"/>
    <property type="match status" value="1"/>
</dbReference>
<dbReference type="Pfam" id="PF07690">
    <property type="entry name" value="MFS_1"/>
    <property type="match status" value="1"/>
</dbReference>
<dbReference type="SUPFAM" id="SSF103473">
    <property type="entry name" value="MFS general substrate transporter"/>
    <property type="match status" value="1"/>
</dbReference>
<dbReference type="PROSITE" id="PS50850">
    <property type="entry name" value="MFS"/>
    <property type="match status" value="1"/>
</dbReference>
<proteinExistence type="inferred from homology"/>
<sequence length="388" mass="44202">MTNINRIGLTWISFLSYAFTGALVVVTGMIMGNISNYFHLSISQMSNIFTFLNAGILVSIFINSWLIEIISLKKQLIFSFILTIIAVIGIVLCNSIFLFSINMFILGLVSGITMSIGTFIITHLYSGSKRGSLLLLTDSFFSMSGMIFPIVTAYLLEKKIIWYWSYICIGAIYLLIFLLTINSSFEKFKTNTKNSKETKEKWNFNVFLLSISALLYILGQLGFISWVPQYATEIMNIDIKKTGSLVSGFWMSYMLGMWFFSFIIKFFNLYRMFIFLTSMSTILMYCFIKSENFLNQQYIIISLGFFSSAIYTIIITLASLQTKHPSPKLINLILLFGTIGTFLTFIITSPIVEAKGLYVTLISSNILYGIVFFLSILIYFNKKYEGVI</sequence>
<keyword id="KW-1003">Cell membrane</keyword>
<keyword id="KW-0472">Membrane</keyword>
<keyword id="KW-0812">Transmembrane</keyword>
<keyword id="KW-1133">Transmembrane helix</keyword>
<accession>B8D860</accession>